<keyword id="KW-0025">Alternative splicing</keyword>
<keyword id="KW-0333">Golgi apparatus</keyword>
<keyword id="KW-0472">Membrane</keyword>
<keyword id="KW-1185">Reference proteome</keyword>
<keyword id="KW-0735">Signal-anchor</keyword>
<keyword id="KW-0812">Transmembrane</keyword>
<keyword id="KW-1133">Transmembrane helix</keyword>
<comment type="function">
    <text evidence="1 2 4">Involved in secondary cell wall cellulose deposition. Required for normal stem development (PubMed:20388664). May act as a bridging protein that binds pectin and other cell wall polysaccharides. Probably involved in maintaining esterification of pectins (By similarity). May be involved in the specific O-acetylation of cell wall polymers (By similarity).</text>
</comment>
<comment type="subcellular location">
    <subcellularLocation>
        <location evidence="6">Golgi apparatus membrane</location>
        <topology evidence="6">Single-pass type II membrane protein</topology>
    </subcellularLocation>
</comment>
<comment type="alternative products">
    <event type="alternative splicing"/>
    <isoform>
        <id>Q8LED3-1</id>
        <name>1</name>
        <sequence type="displayed"/>
    </isoform>
    <isoform>
        <id>Q8LED3-2</id>
        <name>2</name>
        <sequence type="described" ref="VSP_053686"/>
    </isoform>
</comment>
<comment type="disruption phenotype">
    <text evidence="4">Reduction in inflorescence stem elongation.</text>
</comment>
<comment type="miscellaneous">
    <text evidence="7">Contains 2 motifs that are conserved in esterases, but it is unlikely that this protein belongs to the catalytically active pectin esterases.</text>
</comment>
<comment type="similarity">
    <text evidence="6">Belongs to the PC-esterase family. TBL subfamily.</text>
</comment>
<comment type="sequence caution" evidence="6">
    <conflict type="erroneous gene model prediction">
        <sequence resource="EMBL-CDS" id="CAB81919"/>
    </conflict>
</comment>
<sequence>MSFLIPNRGVGGTKIPLSIIVLVLCGFMFFILLYTERISLLSSSSSSSSSFFKLKSCPRKDVSSKPKEKIRKERSEILEVLDDRFEFDPEECNVAAGKWVYNSSIEPLYTDRSCPYIDRQFSCMKNGQPETDYLRWEWQPDDCTIPRFSPKLAMNKLRGKRLLFVGDSLQRSQWESFVCLVESIIPEGEKSMKRSQKYFVFKAKEYNATIEFYWAPYIVESNTDIPVISDPKKRIVKVDSVKDRAKFWEGADILVFNTYVWWMSGLRMKALWGSFGNGESGAEALDTQVAYRLGLKTWANWVDSTVDPNKTRVFFTTMSPTHTRSADWGKPNGTKCFNETKPIKDKKFWGTGSNKQMMKVVSSVIKHMTTHVTVINITQLSEYRIDAHTSVYTETGGKILTAEQRADPMHHADCIHWCLPGLPDTWNRILLAHL</sequence>
<proteinExistence type="evidence at transcript level"/>
<feature type="chain" id="PRO_0000425369" description="Protein trichome birefringence-like 3">
    <location>
        <begin position="1"/>
        <end position="434"/>
    </location>
</feature>
<feature type="transmembrane region" description="Helical; Signal-anchor for type II membrane protein" evidence="3">
    <location>
        <begin position="15"/>
        <end position="35"/>
    </location>
</feature>
<feature type="short sequence motif" description="GDS motif">
    <location>
        <begin position="166"/>
        <end position="168"/>
    </location>
</feature>
<feature type="short sequence motif" description="DCXHWCLPGXXDXWN motif">
    <location>
        <begin position="413"/>
        <end position="427"/>
    </location>
</feature>
<feature type="splice variant" id="VSP_053686" description="In isoform 2." evidence="5">
    <location>
        <begin position="325"/>
        <end position="434"/>
    </location>
</feature>
<feature type="sequence conflict" description="In Ref. 4; BAE99944." evidence="6" ref="4">
    <original>G</original>
    <variation>E</variation>
    <location>
        <position position="276"/>
    </location>
</feature>
<gene>
    <name type="primary">TBL3</name>
    <name type="ordered locus">At5g01360</name>
    <name type="ORF">T10O8.70</name>
</gene>
<name>TBL3_ARATH</name>
<organism>
    <name type="scientific">Arabidopsis thaliana</name>
    <name type="common">Mouse-ear cress</name>
    <dbReference type="NCBI Taxonomy" id="3702"/>
    <lineage>
        <taxon>Eukaryota</taxon>
        <taxon>Viridiplantae</taxon>
        <taxon>Streptophyta</taxon>
        <taxon>Embryophyta</taxon>
        <taxon>Tracheophyta</taxon>
        <taxon>Spermatophyta</taxon>
        <taxon>Magnoliopsida</taxon>
        <taxon>eudicotyledons</taxon>
        <taxon>Gunneridae</taxon>
        <taxon>Pentapetalae</taxon>
        <taxon>rosids</taxon>
        <taxon>malvids</taxon>
        <taxon>Brassicales</taxon>
        <taxon>Brassicaceae</taxon>
        <taxon>Camelineae</taxon>
        <taxon>Arabidopsis</taxon>
    </lineage>
</organism>
<dbReference type="EMBL" id="AL161746">
    <property type="protein sequence ID" value="CAB81919.1"/>
    <property type="status" value="ALT_SEQ"/>
    <property type="molecule type" value="Genomic_DNA"/>
</dbReference>
<dbReference type="EMBL" id="CP002688">
    <property type="protein sequence ID" value="AED90331.1"/>
    <property type="molecule type" value="Genomic_DNA"/>
</dbReference>
<dbReference type="EMBL" id="AY085483">
    <property type="protein sequence ID" value="AAM62709.1"/>
    <property type="molecule type" value="mRNA"/>
</dbReference>
<dbReference type="EMBL" id="AK227978">
    <property type="protein sequence ID" value="BAE99944.1"/>
    <property type="molecule type" value="mRNA"/>
</dbReference>
<dbReference type="EMBL" id="AK317421">
    <property type="protein sequence ID" value="BAH20089.1"/>
    <property type="molecule type" value="mRNA"/>
</dbReference>
<dbReference type="PIR" id="T48158">
    <property type="entry name" value="T48158"/>
</dbReference>
<dbReference type="RefSeq" id="NP_568089.1">
    <molecule id="Q8LED3-1"/>
    <property type="nucleotide sequence ID" value="NM_120214.4"/>
</dbReference>
<dbReference type="SMR" id="Q8LED3"/>
<dbReference type="FunCoup" id="Q8LED3">
    <property type="interactions" value="52"/>
</dbReference>
<dbReference type="STRING" id="3702.Q8LED3"/>
<dbReference type="PaxDb" id="3702-AT5G01360.1"/>
<dbReference type="ProteomicsDB" id="234197">
    <molecule id="Q8LED3-1"/>
</dbReference>
<dbReference type="EnsemblPlants" id="AT5G01360.1">
    <molecule id="Q8LED3-1"/>
    <property type="protein sequence ID" value="AT5G01360.1"/>
    <property type="gene ID" value="AT5G01360"/>
</dbReference>
<dbReference type="GeneID" id="830298"/>
<dbReference type="Gramene" id="AT5G01360.1">
    <molecule id="Q8LED3-1"/>
    <property type="protein sequence ID" value="AT5G01360.1"/>
    <property type="gene ID" value="AT5G01360"/>
</dbReference>
<dbReference type="KEGG" id="ath:AT5G01360"/>
<dbReference type="Araport" id="AT5G01360"/>
<dbReference type="TAIR" id="AT5G01360">
    <property type="gene designation" value="TBL3"/>
</dbReference>
<dbReference type="eggNOG" id="ENOG502QT29">
    <property type="taxonomic scope" value="Eukaryota"/>
</dbReference>
<dbReference type="HOGENOM" id="CLU_020953_3_1_1"/>
<dbReference type="InParanoid" id="Q8LED3"/>
<dbReference type="PhylomeDB" id="Q8LED3"/>
<dbReference type="PRO" id="PR:Q8LED3"/>
<dbReference type="Proteomes" id="UP000006548">
    <property type="component" value="Chromosome 5"/>
</dbReference>
<dbReference type="ExpressionAtlas" id="Q8LED3">
    <property type="expression patterns" value="baseline and differential"/>
</dbReference>
<dbReference type="GO" id="GO:0005794">
    <property type="term" value="C:Golgi apparatus"/>
    <property type="evidence" value="ECO:0000314"/>
    <property type="project" value="TAIR"/>
</dbReference>
<dbReference type="GO" id="GO:0000139">
    <property type="term" value="C:Golgi membrane"/>
    <property type="evidence" value="ECO:0007669"/>
    <property type="project" value="UniProtKB-SubCell"/>
</dbReference>
<dbReference type="GO" id="GO:0005886">
    <property type="term" value="C:plasma membrane"/>
    <property type="evidence" value="ECO:0000314"/>
    <property type="project" value="TAIR"/>
</dbReference>
<dbReference type="GO" id="GO:1990538">
    <property type="term" value="F:xylan O-acetyltransferase activity"/>
    <property type="evidence" value="ECO:0000315"/>
    <property type="project" value="TAIR"/>
</dbReference>
<dbReference type="GO" id="GO:0030244">
    <property type="term" value="P:cellulose biosynthetic process"/>
    <property type="evidence" value="ECO:0000315"/>
    <property type="project" value="TAIR"/>
</dbReference>
<dbReference type="GO" id="GO:0045489">
    <property type="term" value="P:pectin biosynthetic process"/>
    <property type="evidence" value="ECO:0000315"/>
    <property type="project" value="TAIR"/>
</dbReference>
<dbReference type="GO" id="GO:0009827">
    <property type="term" value="P:plant-type cell wall modification"/>
    <property type="evidence" value="ECO:0000315"/>
    <property type="project" value="TAIR"/>
</dbReference>
<dbReference type="GO" id="GO:1990937">
    <property type="term" value="P:xylan acetylation"/>
    <property type="evidence" value="ECO:0007669"/>
    <property type="project" value="EnsemblPlants"/>
</dbReference>
<dbReference type="GO" id="GO:0045492">
    <property type="term" value="P:xylan biosynthetic process"/>
    <property type="evidence" value="ECO:0000315"/>
    <property type="project" value="TAIR"/>
</dbReference>
<dbReference type="InterPro" id="IPR029962">
    <property type="entry name" value="TBL"/>
</dbReference>
<dbReference type="InterPro" id="IPR026057">
    <property type="entry name" value="TBL_C"/>
</dbReference>
<dbReference type="InterPro" id="IPR025846">
    <property type="entry name" value="TBL_N"/>
</dbReference>
<dbReference type="PANTHER" id="PTHR32285:SF7">
    <property type="entry name" value="PROTEIN TRICHOME BIREFRINGENCE-LIKE 3"/>
    <property type="match status" value="1"/>
</dbReference>
<dbReference type="PANTHER" id="PTHR32285">
    <property type="entry name" value="PROTEIN TRICHOME BIREFRINGENCE-LIKE 9-RELATED"/>
    <property type="match status" value="1"/>
</dbReference>
<dbReference type="Pfam" id="PF13839">
    <property type="entry name" value="PC-Esterase"/>
    <property type="match status" value="1"/>
</dbReference>
<dbReference type="Pfam" id="PF14416">
    <property type="entry name" value="PMR5N"/>
    <property type="match status" value="1"/>
</dbReference>
<reference key="1">
    <citation type="journal article" date="2000" name="Nature">
        <title>Sequence and analysis of chromosome 5 of the plant Arabidopsis thaliana.</title>
        <authorList>
            <person name="Tabata S."/>
            <person name="Kaneko T."/>
            <person name="Nakamura Y."/>
            <person name="Kotani H."/>
            <person name="Kato T."/>
            <person name="Asamizu E."/>
            <person name="Miyajima N."/>
            <person name="Sasamoto S."/>
            <person name="Kimura T."/>
            <person name="Hosouchi T."/>
            <person name="Kawashima K."/>
            <person name="Kohara M."/>
            <person name="Matsumoto M."/>
            <person name="Matsuno A."/>
            <person name="Muraki A."/>
            <person name="Nakayama S."/>
            <person name="Nakazaki N."/>
            <person name="Naruo K."/>
            <person name="Okumura S."/>
            <person name="Shinpo S."/>
            <person name="Takeuchi C."/>
            <person name="Wada T."/>
            <person name="Watanabe A."/>
            <person name="Yamada M."/>
            <person name="Yasuda M."/>
            <person name="Sato S."/>
            <person name="de la Bastide M."/>
            <person name="Huang E."/>
            <person name="Spiegel L."/>
            <person name="Gnoj L."/>
            <person name="O'Shaughnessy A."/>
            <person name="Preston R."/>
            <person name="Habermann K."/>
            <person name="Murray J."/>
            <person name="Johnson D."/>
            <person name="Rohlfing T."/>
            <person name="Nelson J."/>
            <person name="Stoneking T."/>
            <person name="Pepin K."/>
            <person name="Spieth J."/>
            <person name="Sekhon M."/>
            <person name="Armstrong J."/>
            <person name="Becker M."/>
            <person name="Belter E."/>
            <person name="Cordum H."/>
            <person name="Cordes M."/>
            <person name="Courtney L."/>
            <person name="Courtney W."/>
            <person name="Dante M."/>
            <person name="Du H."/>
            <person name="Edwards J."/>
            <person name="Fryman J."/>
            <person name="Haakensen B."/>
            <person name="Lamar E."/>
            <person name="Latreille P."/>
            <person name="Leonard S."/>
            <person name="Meyer R."/>
            <person name="Mulvaney E."/>
            <person name="Ozersky P."/>
            <person name="Riley A."/>
            <person name="Strowmatt C."/>
            <person name="Wagner-McPherson C."/>
            <person name="Wollam A."/>
            <person name="Yoakum M."/>
            <person name="Bell M."/>
            <person name="Dedhia N."/>
            <person name="Parnell L."/>
            <person name="Shah R."/>
            <person name="Rodriguez M."/>
            <person name="Hoon See L."/>
            <person name="Vil D."/>
            <person name="Baker J."/>
            <person name="Kirchoff K."/>
            <person name="Toth K."/>
            <person name="King L."/>
            <person name="Bahret A."/>
            <person name="Miller B."/>
            <person name="Marra M.A."/>
            <person name="Martienssen R."/>
            <person name="McCombie W.R."/>
            <person name="Wilson R.K."/>
            <person name="Murphy G."/>
            <person name="Bancroft I."/>
            <person name="Volckaert G."/>
            <person name="Wambutt R."/>
            <person name="Duesterhoeft A."/>
            <person name="Stiekema W."/>
            <person name="Pohl T."/>
            <person name="Entian K.-D."/>
            <person name="Terryn N."/>
            <person name="Hartley N."/>
            <person name="Bent E."/>
            <person name="Johnson S."/>
            <person name="Langham S.-A."/>
            <person name="McCullagh B."/>
            <person name="Robben J."/>
            <person name="Grymonprez B."/>
            <person name="Zimmermann W."/>
            <person name="Ramsperger U."/>
            <person name="Wedler H."/>
            <person name="Balke K."/>
            <person name="Wedler E."/>
            <person name="Peters S."/>
            <person name="van Staveren M."/>
            <person name="Dirkse W."/>
            <person name="Mooijman P."/>
            <person name="Klein Lankhorst R."/>
            <person name="Weitzenegger T."/>
            <person name="Bothe G."/>
            <person name="Rose M."/>
            <person name="Hauf J."/>
            <person name="Berneiser S."/>
            <person name="Hempel S."/>
            <person name="Feldpausch M."/>
            <person name="Lamberth S."/>
            <person name="Villarroel R."/>
            <person name="Gielen J."/>
            <person name="Ardiles W."/>
            <person name="Bents O."/>
            <person name="Lemcke K."/>
            <person name="Kolesov G."/>
            <person name="Mayer K.F.X."/>
            <person name="Rudd S."/>
            <person name="Schoof H."/>
            <person name="Schueller C."/>
            <person name="Zaccaria P."/>
            <person name="Mewes H.-W."/>
            <person name="Bevan M."/>
            <person name="Fransz P.F."/>
        </authorList>
    </citation>
    <scope>NUCLEOTIDE SEQUENCE [LARGE SCALE GENOMIC DNA]</scope>
    <source>
        <strain>cv. Columbia</strain>
    </source>
</reference>
<reference key="2">
    <citation type="journal article" date="2017" name="Plant J.">
        <title>Araport11: a complete reannotation of the Arabidopsis thaliana reference genome.</title>
        <authorList>
            <person name="Cheng C.Y."/>
            <person name="Krishnakumar V."/>
            <person name="Chan A.P."/>
            <person name="Thibaud-Nissen F."/>
            <person name="Schobel S."/>
            <person name="Town C.D."/>
        </authorList>
    </citation>
    <scope>GENOME REANNOTATION</scope>
    <source>
        <strain>cv. Columbia</strain>
    </source>
</reference>
<reference key="3">
    <citation type="submission" date="2002-03" db="EMBL/GenBank/DDBJ databases">
        <title>Full-length cDNA from Arabidopsis thaliana.</title>
        <authorList>
            <person name="Brover V.V."/>
            <person name="Troukhan M.E."/>
            <person name="Alexandrov N.A."/>
            <person name="Lu Y.-P."/>
            <person name="Flavell R.B."/>
            <person name="Feldmann K.A."/>
        </authorList>
    </citation>
    <scope>NUCLEOTIDE SEQUENCE [LARGE SCALE MRNA] (ISOFORM 1)</scope>
</reference>
<reference key="4">
    <citation type="submission" date="2006-07" db="EMBL/GenBank/DDBJ databases">
        <title>Large-scale analysis of RIKEN Arabidopsis full-length (RAFL) cDNAs.</title>
        <authorList>
            <person name="Totoki Y."/>
            <person name="Seki M."/>
            <person name="Ishida J."/>
            <person name="Nakajima M."/>
            <person name="Enju A."/>
            <person name="Kamiya A."/>
            <person name="Narusaka M."/>
            <person name="Shin-i T."/>
            <person name="Nakagawa M."/>
            <person name="Sakamoto N."/>
            <person name="Oishi K."/>
            <person name="Kohara Y."/>
            <person name="Kobayashi M."/>
            <person name="Toyoda A."/>
            <person name="Sakaki Y."/>
            <person name="Sakurai T."/>
            <person name="Iida K."/>
            <person name="Akiyama K."/>
            <person name="Satou M."/>
            <person name="Toyoda T."/>
            <person name="Konagaya A."/>
            <person name="Carninci P."/>
            <person name="Kawai J."/>
            <person name="Hayashizaki Y."/>
            <person name="Shinozaki K."/>
        </authorList>
    </citation>
    <scope>NUCLEOTIDE SEQUENCE [LARGE SCALE MRNA] (ISOFORM 1)</scope>
    <source>
        <strain>cv. Columbia</strain>
    </source>
</reference>
<reference key="5">
    <citation type="journal article" date="2009" name="DNA Res.">
        <title>Analysis of multiple occurrences of alternative splicing events in Arabidopsis thaliana using novel sequenced full-length cDNAs.</title>
        <authorList>
            <person name="Iida K."/>
            <person name="Fukami-Kobayashi K."/>
            <person name="Toyoda A."/>
            <person name="Sakaki Y."/>
            <person name="Kobayashi M."/>
            <person name="Seki M."/>
            <person name="Shinozaki K."/>
        </authorList>
    </citation>
    <scope>NUCLEOTIDE SEQUENCE [LARGE SCALE MRNA] OF 214-324 (ISOFORM 2)</scope>
    <source>
        <strain>cv. Columbia</strain>
    </source>
</reference>
<reference key="6">
    <citation type="journal article" date="2007" name="Plant J.">
        <title>Arabidopsis ESK1 encodes a novel regulator of freezing tolerance.</title>
        <authorList>
            <person name="Xin Z."/>
            <person name="Mandaokar A."/>
            <person name="Chen J."/>
            <person name="Last R.L."/>
            <person name="Browse J."/>
        </authorList>
    </citation>
    <scope>GENE FAMILY</scope>
    <source>
        <strain>cv. Columbia</strain>
    </source>
</reference>
<reference key="7">
    <citation type="journal article" date="2010" name="Plant Physiol.">
        <title>TRICHOME BIREFRINGENCE and its homolog AT5G01360 encode plant-specific DUF231 proteins required for cellulose biosynthesis in Arabidopsis.</title>
        <authorList>
            <person name="Bischoff V."/>
            <person name="Nita S."/>
            <person name="Neumetzler L."/>
            <person name="Schindelasch D."/>
            <person name="Urbain A."/>
            <person name="Eshed R."/>
            <person name="Persson S."/>
            <person name="Delmer D."/>
            <person name="Scheible W.R."/>
        </authorList>
    </citation>
    <scope>FUNCTION</scope>
    <scope>DISRUPTION PHENOTYPE</scope>
    <scope>GENE FAMILY</scope>
    <scope>NOMENCLATURE</scope>
</reference>
<reference key="8">
    <citation type="journal article" date="2010" name="PLoS ONE">
        <title>An integrative approach to the identification of Arabidopsis and rice genes involved in xylan and secondary wall development.</title>
        <authorList>
            <person name="Oikawa A."/>
            <person name="Joshi H.J."/>
            <person name="Rennie E.A."/>
            <person name="Ebert B."/>
            <person name="Manisseri C."/>
            <person name="Heazlewood J.L."/>
            <person name="Scheller H.V."/>
        </authorList>
    </citation>
    <scope>SUBCELLULAR LOCATION</scope>
</reference>
<reference key="9">
    <citation type="journal article" date="2010" name="Plant Signal. Behav.">
        <title>Involvement of TBL/DUF231 proteins into cell wall biology.</title>
        <authorList>
            <person name="Bischoff V."/>
            <person name="Selbig J."/>
            <person name="Scheible W.R."/>
        </authorList>
    </citation>
    <scope>3D-STRUCTURE MODELING</scope>
</reference>
<evidence type="ECO:0000250" key="1">
    <source>
        <dbReference type="UniProtKB" id="Q9FG35"/>
    </source>
</evidence>
<evidence type="ECO:0000250" key="2">
    <source>
        <dbReference type="UniProtKB" id="Q9LY46"/>
    </source>
</evidence>
<evidence type="ECO:0000255" key="3"/>
<evidence type="ECO:0000269" key="4">
    <source>
    </source>
</evidence>
<evidence type="ECO:0000303" key="5">
    <source>
    </source>
</evidence>
<evidence type="ECO:0000305" key="6"/>
<evidence type="ECO:0000305" key="7">
    <source>
    </source>
</evidence>
<accession>Q8LED3</accession>
<accession>B9DH72</accession>
<accession>F4K9C5</accession>
<accession>Q0WSF4</accession>
<accession>Q9M036</accession>
<protein>
    <recommendedName>
        <fullName>Protein trichome birefringence-like 3</fullName>
    </recommendedName>
</protein>